<organism>
    <name type="scientific">Pseudomonas fluorescens (strain Pf0-1)</name>
    <dbReference type="NCBI Taxonomy" id="205922"/>
    <lineage>
        <taxon>Bacteria</taxon>
        <taxon>Pseudomonadati</taxon>
        <taxon>Pseudomonadota</taxon>
        <taxon>Gammaproteobacteria</taxon>
        <taxon>Pseudomonadales</taxon>
        <taxon>Pseudomonadaceae</taxon>
        <taxon>Pseudomonas</taxon>
    </lineage>
</organism>
<sequence length="621" mass="66189">MALLQIAEPGQSPQPHQRRLAVGIDLGTTNSLVAALRSGLSEPLADAEGRVILPSAVRYHADRVEVGESAKLAASSDPLNTVLSVKRLMGRGLSDVKQLGDQLPYRFVGGESHMPFIDTVQGPKSPVEVSADILKVLRQRAEATLGGELVGAVITVPAYFDDAQRQATKDAAKLAGLNVLRLLNEPTAAAVAYGLDQHAEGLVAIYDLGGGTFDISILRLTGGVFEVLATGGDSALGGDDFDHAIAGWIIESASLSADLDPGAQRSLLQAACAAKEALTDSDSVEVAYGDWKAQLTREAFDALIEPMVARSLKACRRAVRDSGVELEDVHAVVMVGGSTRVPRVREAVAEAFGRQPLTEIDPDQVVAIGAAIQADTLAGNKRDGGELLLLDVIPLSLGLETMGGLMEKVIPRNTTIPVARAQDFTTYKDGQSAMAIHVLQGERELISDCRSLARFELRGIPAMVAGAAKIRVTFQVDADGLLSVSARELGSGVEASIQVKPSYGLTDGEIAKMLKDSFQHANDDKVARVLREQQVDAQRLIEAVQGALEADGERLLDAEERMVIDLQVQELTELMKGTDGYAIEQQTKRLSQVTDAFAARRMDQTVKAALSGRNLNEIEDI</sequence>
<reference key="1">
    <citation type="journal article" date="2009" name="Genome Biol.">
        <title>Genomic and genetic analyses of diversity and plant interactions of Pseudomonas fluorescens.</title>
        <authorList>
            <person name="Silby M.W."/>
            <person name="Cerdeno-Tarraga A.M."/>
            <person name="Vernikos G.S."/>
            <person name="Giddens S.R."/>
            <person name="Jackson R.W."/>
            <person name="Preston G.M."/>
            <person name="Zhang X.-X."/>
            <person name="Moon C.D."/>
            <person name="Gehrig S.M."/>
            <person name="Godfrey S.A.C."/>
            <person name="Knight C.G."/>
            <person name="Malone J.G."/>
            <person name="Robinson Z."/>
            <person name="Spiers A.J."/>
            <person name="Harris S."/>
            <person name="Challis G.L."/>
            <person name="Yaxley A.M."/>
            <person name="Harris D."/>
            <person name="Seeger K."/>
            <person name="Murphy L."/>
            <person name="Rutter S."/>
            <person name="Squares R."/>
            <person name="Quail M.A."/>
            <person name="Saunders E."/>
            <person name="Mavromatis K."/>
            <person name="Brettin T.S."/>
            <person name="Bentley S.D."/>
            <person name="Hothersall J."/>
            <person name="Stephens E."/>
            <person name="Thomas C.M."/>
            <person name="Parkhill J."/>
            <person name="Levy S.B."/>
            <person name="Rainey P.B."/>
            <person name="Thomson N.R."/>
        </authorList>
    </citation>
    <scope>NUCLEOTIDE SEQUENCE [LARGE SCALE GENOMIC DNA]</scope>
    <source>
        <strain>Pf0-1</strain>
    </source>
</reference>
<dbReference type="EMBL" id="CP000094">
    <property type="protein sequence ID" value="ABA76345.1"/>
    <property type="molecule type" value="Genomic_DNA"/>
</dbReference>
<dbReference type="RefSeq" id="WP_011335814.1">
    <property type="nucleotide sequence ID" value="NC_007492.2"/>
</dbReference>
<dbReference type="SMR" id="Q3K7A9"/>
<dbReference type="KEGG" id="pfo:Pfl01_4608"/>
<dbReference type="eggNOG" id="COG0443">
    <property type="taxonomic scope" value="Bacteria"/>
</dbReference>
<dbReference type="HOGENOM" id="CLU_005965_2_3_6"/>
<dbReference type="Proteomes" id="UP000002704">
    <property type="component" value="Chromosome"/>
</dbReference>
<dbReference type="GO" id="GO:0005524">
    <property type="term" value="F:ATP binding"/>
    <property type="evidence" value="ECO:0007669"/>
    <property type="project" value="UniProtKB-KW"/>
</dbReference>
<dbReference type="GO" id="GO:0016887">
    <property type="term" value="F:ATP hydrolysis activity"/>
    <property type="evidence" value="ECO:0007669"/>
    <property type="project" value="UniProtKB-UniRule"/>
</dbReference>
<dbReference type="GO" id="GO:0140662">
    <property type="term" value="F:ATP-dependent protein folding chaperone"/>
    <property type="evidence" value="ECO:0007669"/>
    <property type="project" value="InterPro"/>
</dbReference>
<dbReference type="GO" id="GO:0051082">
    <property type="term" value="F:unfolded protein binding"/>
    <property type="evidence" value="ECO:0007669"/>
    <property type="project" value="InterPro"/>
</dbReference>
<dbReference type="GO" id="GO:0016226">
    <property type="term" value="P:iron-sulfur cluster assembly"/>
    <property type="evidence" value="ECO:0007669"/>
    <property type="project" value="InterPro"/>
</dbReference>
<dbReference type="CDD" id="cd10236">
    <property type="entry name" value="ASKHA_NBD_HSP70_HscA"/>
    <property type="match status" value="1"/>
</dbReference>
<dbReference type="FunFam" id="3.30.420.40:FF:000046">
    <property type="entry name" value="Chaperone protein HscA"/>
    <property type="match status" value="1"/>
</dbReference>
<dbReference type="FunFam" id="2.60.34.10:FF:000005">
    <property type="entry name" value="Chaperone protein HscA homolog"/>
    <property type="match status" value="1"/>
</dbReference>
<dbReference type="Gene3D" id="1.20.1270.10">
    <property type="match status" value="1"/>
</dbReference>
<dbReference type="Gene3D" id="3.30.420.40">
    <property type="match status" value="2"/>
</dbReference>
<dbReference type="Gene3D" id="3.90.640.10">
    <property type="entry name" value="Actin, Chain A, domain 4"/>
    <property type="match status" value="1"/>
</dbReference>
<dbReference type="Gene3D" id="2.60.34.10">
    <property type="entry name" value="Substrate Binding Domain Of DNAk, Chain A, domain 1"/>
    <property type="match status" value="1"/>
</dbReference>
<dbReference type="HAMAP" id="MF_00679">
    <property type="entry name" value="HscA"/>
    <property type="match status" value="1"/>
</dbReference>
<dbReference type="InterPro" id="IPR043129">
    <property type="entry name" value="ATPase_NBD"/>
</dbReference>
<dbReference type="InterPro" id="IPR018181">
    <property type="entry name" value="Heat_shock_70_CS"/>
</dbReference>
<dbReference type="InterPro" id="IPR042039">
    <property type="entry name" value="HscA_NBD"/>
</dbReference>
<dbReference type="InterPro" id="IPR029048">
    <property type="entry name" value="HSP70_C_sf"/>
</dbReference>
<dbReference type="InterPro" id="IPR029047">
    <property type="entry name" value="HSP70_peptide-bd_sf"/>
</dbReference>
<dbReference type="InterPro" id="IPR013126">
    <property type="entry name" value="Hsp_70_fam"/>
</dbReference>
<dbReference type="InterPro" id="IPR010236">
    <property type="entry name" value="ISC_FeS_clus_asmbl_HscA"/>
</dbReference>
<dbReference type="NCBIfam" id="TIGR01991">
    <property type="entry name" value="HscA"/>
    <property type="match status" value="1"/>
</dbReference>
<dbReference type="NCBIfam" id="NF003520">
    <property type="entry name" value="PRK05183.1"/>
    <property type="match status" value="1"/>
</dbReference>
<dbReference type="PANTHER" id="PTHR19375">
    <property type="entry name" value="HEAT SHOCK PROTEIN 70KDA"/>
    <property type="match status" value="1"/>
</dbReference>
<dbReference type="Pfam" id="PF00012">
    <property type="entry name" value="HSP70"/>
    <property type="match status" value="1"/>
</dbReference>
<dbReference type="PRINTS" id="PR00301">
    <property type="entry name" value="HEATSHOCK70"/>
</dbReference>
<dbReference type="SUPFAM" id="SSF53067">
    <property type="entry name" value="Actin-like ATPase domain"/>
    <property type="match status" value="2"/>
</dbReference>
<dbReference type="SUPFAM" id="SSF100934">
    <property type="entry name" value="Heat shock protein 70kD (HSP70), C-terminal subdomain"/>
    <property type="match status" value="1"/>
</dbReference>
<dbReference type="SUPFAM" id="SSF100920">
    <property type="entry name" value="Heat shock protein 70kD (HSP70), peptide-binding domain"/>
    <property type="match status" value="1"/>
</dbReference>
<dbReference type="PROSITE" id="PS00297">
    <property type="entry name" value="HSP70_1"/>
    <property type="match status" value="1"/>
</dbReference>
<dbReference type="PROSITE" id="PS00329">
    <property type="entry name" value="HSP70_2"/>
    <property type="match status" value="1"/>
</dbReference>
<dbReference type="PROSITE" id="PS01036">
    <property type="entry name" value="HSP70_3"/>
    <property type="match status" value="2"/>
</dbReference>
<keyword id="KW-0067">ATP-binding</keyword>
<keyword id="KW-0143">Chaperone</keyword>
<keyword id="KW-0547">Nucleotide-binding</keyword>
<feature type="chain" id="PRO_1000044875" description="Chaperone protein HscA homolog">
    <location>
        <begin position="1"/>
        <end position="621"/>
    </location>
</feature>
<name>HSCA_PSEPF</name>
<protein>
    <recommendedName>
        <fullName evidence="1">Chaperone protein HscA homolog</fullName>
    </recommendedName>
</protein>
<proteinExistence type="inferred from homology"/>
<comment type="function">
    <text evidence="1">Chaperone involved in the maturation of iron-sulfur cluster-containing proteins. Has a low intrinsic ATPase activity which is markedly stimulated by HscB.</text>
</comment>
<comment type="similarity">
    <text evidence="1">Belongs to the heat shock protein 70 family.</text>
</comment>
<evidence type="ECO:0000255" key="1">
    <source>
        <dbReference type="HAMAP-Rule" id="MF_00679"/>
    </source>
</evidence>
<gene>
    <name evidence="1" type="primary">hscA</name>
    <name type="ordered locus">Pfl01_4608</name>
</gene>
<accession>Q3K7A9</accession>